<name>EFTU_BRASB</name>
<dbReference type="EC" id="3.6.5.3" evidence="2"/>
<dbReference type="EMBL" id="CP000494">
    <property type="protein sequence ID" value="ABQ37073.1"/>
    <property type="molecule type" value="Genomic_DNA"/>
</dbReference>
<dbReference type="RefSeq" id="WP_008963462.1">
    <property type="nucleotide sequence ID" value="NC_009485.1"/>
</dbReference>
<dbReference type="SMR" id="A5ELM9"/>
<dbReference type="STRING" id="288000.BBta_5072"/>
<dbReference type="KEGG" id="bbt:BBta_5072"/>
<dbReference type="eggNOG" id="COG0050">
    <property type="taxonomic scope" value="Bacteria"/>
</dbReference>
<dbReference type="HOGENOM" id="CLU_007265_0_0_5"/>
<dbReference type="OrthoDB" id="9803139at2"/>
<dbReference type="Proteomes" id="UP000000246">
    <property type="component" value="Chromosome"/>
</dbReference>
<dbReference type="GO" id="GO:0005829">
    <property type="term" value="C:cytosol"/>
    <property type="evidence" value="ECO:0007669"/>
    <property type="project" value="TreeGrafter"/>
</dbReference>
<dbReference type="GO" id="GO:0005525">
    <property type="term" value="F:GTP binding"/>
    <property type="evidence" value="ECO:0007669"/>
    <property type="project" value="UniProtKB-UniRule"/>
</dbReference>
<dbReference type="GO" id="GO:0003924">
    <property type="term" value="F:GTPase activity"/>
    <property type="evidence" value="ECO:0007669"/>
    <property type="project" value="InterPro"/>
</dbReference>
<dbReference type="GO" id="GO:0097216">
    <property type="term" value="F:guanosine tetraphosphate binding"/>
    <property type="evidence" value="ECO:0007669"/>
    <property type="project" value="UniProtKB-ARBA"/>
</dbReference>
<dbReference type="GO" id="GO:0003746">
    <property type="term" value="F:translation elongation factor activity"/>
    <property type="evidence" value="ECO:0007669"/>
    <property type="project" value="UniProtKB-UniRule"/>
</dbReference>
<dbReference type="CDD" id="cd01884">
    <property type="entry name" value="EF_Tu"/>
    <property type="match status" value="1"/>
</dbReference>
<dbReference type="CDD" id="cd03697">
    <property type="entry name" value="EFTU_II"/>
    <property type="match status" value="1"/>
</dbReference>
<dbReference type="CDD" id="cd03707">
    <property type="entry name" value="EFTU_III"/>
    <property type="match status" value="1"/>
</dbReference>
<dbReference type="FunFam" id="2.40.30.10:FF:000001">
    <property type="entry name" value="Elongation factor Tu"/>
    <property type="match status" value="1"/>
</dbReference>
<dbReference type="FunFam" id="3.40.50.300:FF:000003">
    <property type="entry name" value="Elongation factor Tu"/>
    <property type="match status" value="1"/>
</dbReference>
<dbReference type="Gene3D" id="3.40.50.300">
    <property type="entry name" value="P-loop containing nucleotide triphosphate hydrolases"/>
    <property type="match status" value="1"/>
</dbReference>
<dbReference type="Gene3D" id="2.40.30.10">
    <property type="entry name" value="Translation factors"/>
    <property type="match status" value="2"/>
</dbReference>
<dbReference type="HAMAP" id="MF_00118_B">
    <property type="entry name" value="EF_Tu_B"/>
    <property type="match status" value="1"/>
</dbReference>
<dbReference type="InterPro" id="IPR041709">
    <property type="entry name" value="EF-Tu_GTP-bd"/>
</dbReference>
<dbReference type="InterPro" id="IPR050055">
    <property type="entry name" value="EF-Tu_GTPase"/>
</dbReference>
<dbReference type="InterPro" id="IPR004161">
    <property type="entry name" value="EFTu-like_2"/>
</dbReference>
<dbReference type="InterPro" id="IPR033720">
    <property type="entry name" value="EFTU_2"/>
</dbReference>
<dbReference type="InterPro" id="IPR031157">
    <property type="entry name" value="G_TR_CS"/>
</dbReference>
<dbReference type="InterPro" id="IPR027417">
    <property type="entry name" value="P-loop_NTPase"/>
</dbReference>
<dbReference type="InterPro" id="IPR005225">
    <property type="entry name" value="Small_GTP-bd"/>
</dbReference>
<dbReference type="InterPro" id="IPR000795">
    <property type="entry name" value="T_Tr_GTP-bd_dom"/>
</dbReference>
<dbReference type="InterPro" id="IPR009000">
    <property type="entry name" value="Transl_B-barrel_sf"/>
</dbReference>
<dbReference type="InterPro" id="IPR009001">
    <property type="entry name" value="Transl_elong_EF1A/Init_IF2_C"/>
</dbReference>
<dbReference type="InterPro" id="IPR004541">
    <property type="entry name" value="Transl_elong_EFTu/EF1A_bac/org"/>
</dbReference>
<dbReference type="InterPro" id="IPR004160">
    <property type="entry name" value="Transl_elong_EFTu/EF1A_C"/>
</dbReference>
<dbReference type="NCBIfam" id="TIGR00485">
    <property type="entry name" value="EF-Tu"/>
    <property type="match status" value="1"/>
</dbReference>
<dbReference type="NCBIfam" id="NF000766">
    <property type="entry name" value="PRK00049.1"/>
    <property type="match status" value="1"/>
</dbReference>
<dbReference type="NCBIfam" id="NF009372">
    <property type="entry name" value="PRK12735.1"/>
    <property type="match status" value="1"/>
</dbReference>
<dbReference type="NCBIfam" id="NF009373">
    <property type="entry name" value="PRK12736.1"/>
    <property type="match status" value="1"/>
</dbReference>
<dbReference type="NCBIfam" id="TIGR00231">
    <property type="entry name" value="small_GTP"/>
    <property type="match status" value="1"/>
</dbReference>
<dbReference type="PANTHER" id="PTHR43721:SF22">
    <property type="entry name" value="ELONGATION FACTOR TU, MITOCHONDRIAL"/>
    <property type="match status" value="1"/>
</dbReference>
<dbReference type="PANTHER" id="PTHR43721">
    <property type="entry name" value="ELONGATION FACTOR TU-RELATED"/>
    <property type="match status" value="1"/>
</dbReference>
<dbReference type="Pfam" id="PF00009">
    <property type="entry name" value="GTP_EFTU"/>
    <property type="match status" value="1"/>
</dbReference>
<dbReference type="Pfam" id="PF03144">
    <property type="entry name" value="GTP_EFTU_D2"/>
    <property type="match status" value="1"/>
</dbReference>
<dbReference type="Pfam" id="PF03143">
    <property type="entry name" value="GTP_EFTU_D3"/>
    <property type="match status" value="1"/>
</dbReference>
<dbReference type="PRINTS" id="PR00315">
    <property type="entry name" value="ELONGATNFCT"/>
</dbReference>
<dbReference type="SUPFAM" id="SSF50465">
    <property type="entry name" value="EF-Tu/eEF-1alpha/eIF2-gamma C-terminal domain"/>
    <property type="match status" value="1"/>
</dbReference>
<dbReference type="SUPFAM" id="SSF52540">
    <property type="entry name" value="P-loop containing nucleoside triphosphate hydrolases"/>
    <property type="match status" value="1"/>
</dbReference>
<dbReference type="SUPFAM" id="SSF50447">
    <property type="entry name" value="Translation proteins"/>
    <property type="match status" value="1"/>
</dbReference>
<dbReference type="PROSITE" id="PS00301">
    <property type="entry name" value="G_TR_1"/>
    <property type="match status" value="1"/>
</dbReference>
<dbReference type="PROSITE" id="PS51722">
    <property type="entry name" value="G_TR_2"/>
    <property type="match status" value="1"/>
</dbReference>
<sequence>MAKAKFERNKPHCNIGTIGHVDHGKTSLTAAITKILAETGGATFTAYDQIDKAPEEKARGITISTAHVEYETQNRHYAHVDCPGHADYVKNMITGAAQMDGAILVVSAADGPMPQTREHILLARQVGVPALVVFLNKCDMVDDPELLELVELEVRELLSKYEFPGDKIPIIKGSALAALEDSDKKLGHDAILELMRNVDEYIPQPERPIDQPFLMPVEDVFSISGRGTVVTGRVERGVIKVGEEIEIVGIRPTQKTTVTGVEMFRKLLDQGQAGDNIGALLRGTKREDVERGQVLCKPGSVKPHTKFKAEAYILTKEEGGRHTPFFTNYRPQFYFRTTDVTGVVHLPEGTEMVMPGDNIAMEVHLIVPIAMEEKLRFAIREGGRTVGAGVVASIIE</sequence>
<gene>
    <name evidence="2" type="primary">tuf</name>
    <name type="ordered locus">BBta_5072</name>
</gene>
<proteinExistence type="inferred from homology"/>
<reference key="1">
    <citation type="journal article" date="2007" name="Science">
        <title>Legumes symbioses: absence of nod genes in photosynthetic bradyrhizobia.</title>
        <authorList>
            <person name="Giraud E."/>
            <person name="Moulin L."/>
            <person name="Vallenet D."/>
            <person name="Barbe V."/>
            <person name="Cytryn E."/>
            <person name="Avarre J.-C."/>
            <person name="Jaubert M."/>
            <person name="Simon D."/>
            <person name="Cartieaux F."/>
            <person name="Prin Y."/>
            <person name="Bena G."/>
            <person name="Hannibal L."/>
            <person name="Fardoux J."/>
            <person name="Kojadinovic M."/>
            <person name="Vuillet L."/>
            <person name="Lajus A."/>
            <person name="Cruveiller S."/>
            <person name="Rouy Z."/>
            <person name="Mangenot S."/>
            <person name="Segurens B."/>
            <person name="Dossat C."/>
            <person name="Franck W.L."/>
            <person name="Chang W.-S."/>
            <person name="Saunders E."/>
            <person name="Bruce D."/>
            <person name="Richardson P."/>
            <person name="Normand P."/>
            <person name="Dreyfus B."/>
            <person name="Pignol D."/>
            <person name="Stacey G."/>
            <person name="Emerich D."/>
            <person name="Vermeglio A."/>
            <person name="Medigue C."/>
            <person name="Sadowsky M."/>
        </authorList>
    </citation>
    <scope>NUCLEOTIDE SEQUENCE [LARGE SCALE GENOMIC DNA]</scope>
    <source>
        <strain>BTAi1 / ATCC BAA-1182</strain>
    </source>
</reference>
<protein>
    <recommendedName>
        <fullName evidence="2">Elongation factor Tu</fullName>
        <shortName evidence="2">EF-Tu</shortName>
        <ecNumber evidence="2">3.6.5.3</ecNumber>
    </recommendedName>
</protein>
<organism>
    <name type="scientific">Bradyrhizobium sp. (strain BTAi1 / ATCC BAA-1182)</name>
    <dbReference type="NCBI Taxonomy" id="288000"/>
    <lineage>
        <taxon>Bacteria</taxon>
        <taxon>Pseudomonadati</taxon>
        <taxon>Pseudomonadota</taxon>
        <taxon>Alphaproteobacteria</taxon>
        <taxon>Hyphomicrobiales</taxon>
        <taxon>Nitrobacteraceae</taxon>
        <taxon>Bradyrhizobium</taxon>
    </lineage>
</organism>
<comment type="function">
    <text evidence="2">GTP hydrolase that promotes the GTP-dependent binding of aminoacyl-tRNA to the A-site of ribosomes during protein biosynthesis.</text>
</comment>
<comment type="catalytic activity">
    <reaction evidence="2">
        <text>GTP + H2O = GDP + phosphate + H(+)</text>
        <dbReference type="Rhea" id="RHEA:19669"/>
        <dbReference type="ChEBI" id="CHEBI:15377"/>
        <dbReference type="ChEBI" id="CHEBI:15378"/>
        <dbReference type="ChEBI" id="CHEBI:37565"/>
        <dbReference type="ChEBI" id="CHEBI:43474"/>
        <dbReference type="ChEBI" id="CHEBI:58189"/>
        <dbReference type="EC" id="3.6.5.3"/>
    </reaction>
    <physiologicalReaction direction="left-to-right" evidence="2">
        <dbReference type="Rhea" id="RHEA:19670"/>
    </physiologicalReaction>
</comment>
<comment type="subunit">
    <text evidence="2">Monomer.</text>
</comment>
<comment type="subcellular location">
    <subcellularLocation>
        <location evidence="2">Cytoplasm</location>
    </subcellularLocation>
</comment>
<comment type="similarity">
    <text evidence="2">Belongs to the TRAFAC class translation factor GTPase superfamily. Classic translation factor GTPase family. EF-Tu/EF-1A subfamily.</text>
</comment>
<feature type="chain" id="PRO_1000015622" description="Elongation factor Tu">
    <location>
        <begin position="1"/>
        <end position="396"/>
    </location>
</feature>
<feature type="domain" description="tr-type G">
    <location>
        <begin position="10"/>
        <end position="206"/>
    </location>
</feature>
<feature type="region of interest" description="G1" evidence="1">
    <location>
        <begin position="19"/>
        <end position="26"/>
    </location>
</feature>
<feature type="region of interest" description="G2" evidence="1">
    <location>
        <begin position="60"/>
        <end position="64"/>
    </location>
</feature>
<feature type="region of interest" description="G3" evidence="1">
    <location>
        <begin position="81"/>
        <end position="84"/>
    </location>
</feature>
<feature type="region of interest" description="G4" evidence="1">
    <location>
        <begin position="136"/>
        <end position="139"/>
    </location>
</feature>
<feature type="region of interest" description="G5" evidence="1">
    <location>
        <begin position="174"/>
        <end position="176"/>
    </location>
</feature>
<feature type="binding site" evidence="2">
    <location>
        <begin position="19"/>
        <end position="26"/>
    </location>
    <ligand>
        <name>GTP</name>
        <dbReference type="ChEBI" id="CHEBI:37565"/>
    </ligand>
</feature>
<feature type="binding site" evidence="2">
    <location>
        <position position="26"/>
    </location>
    <ligand>
        <name>Mg(2+)</name>
        <dbReference type="ChEBI" id="CHEBI:18420"/>
    </ligand>
</feature>
<feature type="binding site" evidence="2">
    <location>
        <begin position="81"/>
        <end position="85"/>
    </location>
    <ligand>
        <name>GTP</name>
        <dbReference type="ChEBI" id="CHEBI:37565"/>
    </ligand>
</feature>
<feature type="binding site" evidence="2">
    <location>
        <begin position="136"/>
        <end position="139"/>
    </location>
    <ligand>
        <name>GTP</name>
        <dbReference type="ChEBI" id="CHEBI:37565"/>
    </ligand>
</feature>
<evidence type="ECO:0000250" key="1"/>
<evidence type="ECO:0000255" key="2">
    <source>
        <dbReference type="HAMAP-Rule" id="MF_00118"/>
    </source>
</evidence>
<keyword id="KW-0963">Cytoplasm</keyword>
<keyword id="KW-0251">Elongation factor</keyword>
<keyword id="KW-0342">GTP-binding</keyword>
<keyword id="KW-0378">Hydrolase</keyword>
<keyword id="KW-0460">Magnesium</keyword>
<keyword id="KW-0479">Metal-binding</keyword>
<keyword id="KW-0547">Nucleotide-binding</keyword>
<keyword id="KW-0648">Protein biosynthesis</keyword>
<keyword id="KW-1185">Reference proteome</keyword>
<accession>A5ELM9</accession>